<dbReference type="EC" id="3.6.1.31" evidence="1"/>
<dbReference type="EMBL" id="CP000872">
    <property type="protein sequence ID" value="ABX63115.1"/>
    <property type="molecule type" value="Genomic_DNA"/>
</dbReference>
<dbReference type="RefSeq" id="WP_002965152.1">
    <property type="nucleotide sequence ID" value="NC_010103.1"/>
</dbReference>
<dbReference type="SMR" id="A9M9S0"/>
<dbReference type="KEGG" id="bcs:BCAN_A2132"/>
<dbReference type="HOGENOM" id="CLU_123337_1_1_5"/>
<dbReference type="PhylomeDB" id="A9M9S0"/>
<dbReference type="UniPathway" id="UPA00031">
    <property type="reaction ID" value="UER00007"/>
</dbReference>
<dbReference type="Proteomes" id="UP000001385">
    <property type="component" value="Chromosome I"/>
</dbReference>
<dbReference type="GO" id="GO:0005737">
    <property type="term" value="C:cytoplasm"/>
    <property type="evidence" value="ECO:0007669"/>
    <property type="project" value="UniProtKB-SubCell"/>
</dbReference>
<dbReference type="GO" id="GO:0005524">
    <property type="term" value="F:ATP binding"/>
    <property type="evidence" value="ECO:0007669"/>
    <property type="project" value="UniProtKB-KW"/>
</dbReference>
<dbReference type="GO" id="GO:0004636">
    <property type="term" value="F:phosphoribosyl-ATP diphosphatase activity"/>
    <property type="evidence" value="ECO:0007669"/>
    <property type="project" value="UniProtKB-UniRule"/>
</dbReference>
<dbReference type="GO" id="GO:0000105">
    <property type="term" value="P:L-histidine biosynthetic process"/>
    <property type="evidence" value="ECO:0007669"/>
    <property type="project" value="UniProtKB-UniRule"/>
</dbReference>
<dbReference type="CDD" id="cd11534">
    <property type="entry name" value="NTP-PPase_HisIE_like"/>
    <property type="match status" value="1"/>
</dbReference>
<dbReference type="Gene3D" id="1.10.287.1080">
    <property type="entry name" value="MazG-like"/>
    <property type="match status" value="1"/>
</dbReference>
<dbReference type="HAMAP" id="MF_01020">
    <property type="entry name" value="HisE"/>
    <property type="match status" value="1"/>
</dbReference>
<dbReference type="InterPro" id="IPR008179">
    <property type="entry name" value="HisE"/>
</dbReference>
<dbReference type="InterPro" id="IPR021130">
    <property type="entry name" value="PRib-ATP_PPHydrolase-like"/>
</dbReference>
<dbReference type="NCBIfam" id="TIGR03188">
    <property type="entry name" value="histidine_hisI"/>
    <property type="match status" value="1"/>
</dbReference>
<dbReference type="NCBIfam" id="NF001613">
    <property type="entry name" value="PRK00400.1-5"/>
    <property type="match status" value="1"/>
</dbReference>
<dbReference type="PANTHER" id="PTHR42945">
    <property type="entry name" value="HISTIDINE BIOSYNTHESIS BIFUNCTIONAL PROTEIN"/>
    <property type="match status" value="1"/>
</dbReference>
<dbReference type="PANTHER" id="PTHR42945:SF9">
    <property type="entry name" value="HISTIDINE BIOSYNTHESIS BIFUNCTIONAL PROTEIN HISIE"/>
    <property type="match status" value="1"/>
</dbReference>
<dbReference type="Pfam" id="PF01503">
    <property type="entry name" value="PRA-PH"/>
    <property type="match status" value="1"/>
</dbReference>
<dbReference type="SUPFAM" id="SSF101386">
    <property type="entry name" value="all-alpha NTP pyrophosphatases"/>
    <property type="match status" value="1"/>
</dbReference>
<keyword id="KW-0028">Amino-acid biosynthesis</keyword>
<keyword id="KW-0067">ATP-binding</keyword>
<keyword id="KW-0963">Cytoplasm</keyword>
<keyword id="KW-0368">Histidine biosynthesis</keyword>
<keyword id="KW-0378">Hydrolase</keyword>
<keyword id="KW-0547">Nucleotide-binding</keyword>
<keyword id="KW-1185">Reference proteome</keyword>
<name>HIS2_BRUC2</name>
<organism>
    <name type="scientific">Brucella canis (strain ATCC 23365 / NCTC 10854 / RM-666)</name>
    <dbReference type="NCBI Taxonomy" id="483179"/>
    <lineage>
        <taxon>Bacteria</taxon>
        <taxon>Pseudomonadati</taxon>
        <taxon>Pseudomonadota</taxon>
        <taxon>Alphaproteobacteria</taxon>
        <taxon>Hyphomicrobiales</taxon>
        <taxon>Brucellaceae</taxon>
        <taxon>Brucella/Ochrobactrum group</taxon>
        <taxon>Brucella</taxon>
    </lineage>
</organism>
<feature type="chain" id="PRO_1000084166" description="Phosphoribosyl-ATP pyrophosphatase">
    <location>
        <begin position="1"/>
        <end position="107"/>
    </location>
</feature>
<gene>
    <name evidence="1" type="primary">hisE</name>
    <name type="ordered locus">BCAN_A2132</name>
</gene>
<evidence type="ECO:0000255" key="1">
    <source>
        <dbReference type="HAMAP-Rule" id="MF_01020"/>
    </source>
</evidence>
<accession>A9M9S0</accession>
<sequence>MSQFTLADLERIVAERASVTDGTSYTASLVAKGQPKAAQKLGEEAVETVIAAVSGDRAGVVSESADLLYHLAVVWNIAGVALEDVLQELQRRTAQTGLAEKASRPKG</sequence>
<reference key="1">
    <citation type="submission" date="2007-10" db="EMBL/GenBank/DDBJ databases">
        <title>Brucella canis ATCC 23365 whole genome shotgun sequencing project.</title>
        <authorList>
            <person name="Setubal J.C."/>
            <person name="Bowns C."/>
            <person name="Boyle S."/>
            <person name="Crasta O.R."/>
            <person name="Czar M.J."/>
            <person name="Dharmanolla C."/>
            <person name="Gillespie J.J."/>
            <person name="Kenyon R.W."/>
            <person name="Lu J."/>
            <person name="Mane S."/>
            <person name="Mohapatra S."/>
            <person name="Nagrani S."/>
            <person name="Purkayastha A."/>
            <person name="Rajasimha H.K."/>
            <person name="Shallom J.M."/>
            <person name="Shallom S."/>
            <person name="Shukla M."/>
            <person name="Snyder E.E."/>
            <person name="Sobral B.W."/>
            <person name="Wattam A.R."/>
            <person name="Will R."/>
            <person name="Williams K."/>
            <person name="Yoo H."/>
            <person name="Bruce D."/>
            <person name="Detter C."/>
            <person name="Munk C."/>
            <person name="Brettin T.S."/>
        </authorList>
    </citation>
    <scope>NUCLEOTIDE SEQUENCE [LARGE SCALE GENOMIC DNA]</scope>
    <source>
        <strain>ATCC 23365 / NCTC 10854 / RM-666</strain>
    </source>
</reference>
<proteinExistence type="inferred from homology"/>
<protein>
    <recommendedName>
        <fullName evidence="1">Phosphoribosyl-ATP pyrophosphatase</fullName>
        <shortName evidence="1">PRA-PH</shortName>
        <ecNumber evidence="1">3.6.1.31</ecNumber>
    </recommendedName>
</protein>
<comment type="catalytic activity">
    <reaction evidence="1">
        <text>1-(5-phospho-beta-D-ribosyl)-ATP + H2O = 1-(5-phospho-beta-D-ribosyl)-5'-AMP + diphosphate + H(+)</text>
        <dbReference type="Rhea" id="RHEA:22828"/>
        <dbReference type="ChEBI" id="CHEBI:15377"/>
        <dbReference type="ChEBI" id="CHEBI:15378"/>
        <dbReference type="ChEBI" id="CHEBI:33019"/>
        <dbReference type="ChEBI" id="CHEBI:59457"/>
        <dbReference type="ChEBI" id="CHEBI:73183"/>
        <dbReference type="EC" id="3.6.1.31"/>
    </reaction>
</comment>
<comment type="pathway">
    <text evidence="1">Amino-acid biosynthesis; L-histidine biosynthesis; L-histidine from 5-phospho-alpha-D-ribose 1-diphosphate: step 2/9.</text>
</comment>
<comment type="subcellular location">
    <subcellularLocation>
        <location evidence="1">Cytoplasm</location>
    </subcellularLocation>
</comment>
<comment type="similarity">
    <text evidence="1">Belongs to the PRA-PH family.</text>
</comment>